<accession>Q0TF69</accession>
<gene>
    <name evidence="1" type="primary">mntH</name>
    <name type="ordered locus">ECP_2417</name>
</gene>
<reference key="1">
    <citation type="journal article" date="2006" name="Mol. Microbiol.">
        <title>Role of pathogenicity island-associated integrases in the genome plasticity of uropathogenic Escherichia coli strain 536.</title>
        <authorList>
            <person name="Hochhut B."/>
            <person name="Wilde C."/>
            <person name="Balling G."/>
            <person name="Middendorf B."/>
            <person name="Dobrindt U."/>
            <person name="Brzuszkiewicz E."/>
            <person name="Gottschalk G."/>
            <person name="Carniel E."/>
            <person name="Hacker J."/>
        </authorList>
    </citation>
    <scope>NUCLEOTIDE SEQUENCE [LARGE SCALE GENOMIC DNA]</scope>
    <source>
        <strain>536 / UPEC</strain>
    </source>
</reference>
<name>MNTH_ECOL5</name>
<keyword id="KW-0997">Cell inner membrane</keyword>
<keyword id="KW-1003">Cell membrane</keyword>
<keyword id="KW-0406">Ion transport</keyword>
<keyword id="KW-0472">Membrane</keyword>
<keyword id="KW-0769">Symport</keyword>
<keyword id="KW-0812">Transmembrane</keyword>
<keyword id="KW-1133">Transmembrane helix</keyword>
<keyword id="KW-0813">Transport</keyword>
<dbReference type="EMBL" id="CP000247">
    <property type="protein sequence ID" value="ABG70410.1"/>
    <property type="molecule type" value="Genomic_DNA"/>
</dbReference>
<dbReference type="RefSeq" id="WP_000186369.1">
    <property type="nucleotide sequence ID" value="NC_008253.1"/>
</dbReference>
<dbReference type="SMR" id="Q0TF69"/>
<dbReference type="KEGG" id="ecp:ECP_2417"/>
<dbReference type="HOGENOM" id="CLU_020088_2_0_6"/>
<dbReference type="Proteomes" id="UP000009182">
    <property type="component" value="Chromosome"/>
</dbReference>
<dbReference type="GO" id="GO:0005886">
    <property type="term" value="C:plasma membrane"/>
    <property type="evidence" value="ECO:0007669"/>
    <property type="project" value="UniProtKB-SubCell"/>
</dbReference>
<dbReference type="GO" id="GO:0015086">
    <property type="term" value="F:cadmium ion transmembrane transporter activity"/>
    <property type="evidence" value="ECO:0007669"/>
    <property type="project" value="TreeGrafter"/>
</dbReference>
<dbReference type="GO" id="GO:0005384">
    <property type="term" value="F:manganese ion transmembrane transporter activity"/>
    <property type="evidence" value="ECO:0007669"/>
    <property type="project" value="TreeGrafter"/>
</dbReference>
<dbReference type="GO" id="GO:0046872">
    <property type="term" value="F:metal ion binding"/>
    <property type="evidence" value="ECO:0007669"/>
    <property type="project" value="UniProtKB-UniRule"/>
</dbReference>
<dbReference type="GO" id="GO:0015293">
    <property type="term" value="F:symporter activity"/>
    <property type="evidence" value="ECO:0007669"/>
    <property type="project" value="UniProtKB-UniRule"/>
</dbReference>
<dbReference type="GO" id="GO:0034755">
    <property type="term" value="P:iron ion transmembrane transport"/>
    <property type="evidence" value="ECO:0007669"/>
    <property type="project" value="TreeGrafter"/>
</dbReference>
<dbReference type="HAMAP" id="MF_00221">
    <property type="entry name" value="NRAMP"/>
    <property type="match status" value="1"/>
</dbReference>
<dbReference type="InterPro" id="IPR001046">
    <property type="entry name" value="NRAMP_fam"/>
</dbReference>
<dbReference type="NCBIfam" id="TIGR01197">
    <property type="entry name" value="nramp"/>
    <property type="match status" value="1"/>
</dbReference>
<dbReference type="NCBIfam" id="NF037982">
    <property type="entry name" value="Nramp_1"/>
    <property type="match status" value="1"/>
</dbReference>
<dbReference type="NCBIfam" id="NF001923">
    <property type="entry name" value="PRK00701.1"/>
    <property type="match status" value="1"/>
</dbReference>
<dbReference type="PANTHER" id="PTHR11706:SF33">
    <property type="entry name" value="NATURAL RESISTANCE-ASSOCIATED MACROPHAGE PROTEIN 2"/>
    <property type="match status" value="1"/>
</dbReference>
<dbReference type="PANTHER" id="PTHR11706">
    <property type="entry name" value="SOLUTE CARRIER PROTEIN FAMILY 11 MEMBER"/>
    <property type="match status" value="1"/>
</dbReference>
<dbReference type="Pfam" id="PF01566">
    <property type="entry name" value="Nramp"/>
    <property type="match status" value="1"/>
</dbReference>
<dbReference type="PRINTS" id="PR00447">
    <property type="entry name" value="NATRESASSCMP"/>
</dbReference>
<sequence>MTNYRVESSSGRAARKMRLALMGPAFIAAIGYIDPGNFATNIQAGASFGYQLLWVVVWANLMAMLIQILSAKLGIATGKNLAEQIRDHYPRPVVWFYWVQAEIIAMATDLAEFIGAAIGFKLILGVSLLQGAVLTGIATFLILMLQRRGQKPLEKVIGGLLLFVAAAYIVELIFSQPNLAQLGKGMVIPSLPTSEAVFLAAGVLGATIMPHVIYLHSSLTQHLHGGSRQQRYSATKWDVAIAMTIAGFVNLAMMATAAAAFHFSGHTGVADLDEAYLTLQPLLSHAAATVFGLSLVAAGLSSTVVGTLAGQVVMQGFIRFHIPLWVRRTVTMLPSFIVILMGLDPTRILVMSQVLLSFGIALALVPLLIFTSDSKLMGDLVNSKRVKQTGWVIVVLVVALNIWLLVGTALGL</sequence>
<evidence type="ECO:0000255" key="1">
    <source>
        <dbReference type="HAMAP-Rule" id="MF_00221"/>
    </source>
</evidence>
<feature type="chain" id="PRO_1000024101" description="Divalent metal cation transporter MntH">
    <location>
        <begin position="1"/>
        <end position="412"/>
    </location>
</feature>
<feature type="topological domain" description="Cytoplasmic" evidence="1">
    <location>
        <begin position="1"/>
        <end position="19"/>
    </location>
</feature>
<feature type="transmembrane region" description="Helical" evidence="1">
    <location>
        <begin position="20"/>
        <end position="39"/>
    </location>
</feature>
<feature type="topological domain" description="Periplasmic" evidence="1">
    <location>
        <begin position="40"/>
        <end position="51"/>
    </location>
</feature>
<feature type="transmembrane region" description="Helical" evidence="1">
    <location>
        <begin position="52"/>
        <end position="71"/>
    </location>
</feature>
<feature type="topological domain" description="Cytoplasmic" evidence="1">
    <location>
        <begin position="72"/>
        <end position="95"/>
    </location>
</feature>
<feature type="transmembrane region" description="Helical" evidence="1">
    <location>
        <begin position="96"/>
        <end position="118"/>
    </location>
</feature>
<feature type="topological domain" description="Periplasmic" evidence="1">
    <location>
        <begin position="119"/>
        <end position="125"/>
    </location>
</feature>
<feature type="transmembrane region" description="Helical" evidence="1">
    <location>
        <begin position="126"/>
        <end position="145"/>
    </location>
</feature>
<feature type="topological domain" description="Cytoplasmic" evidence="1">
    <location>
        <begin position="146"/>
        <end position="155"/>
    </location>
</feature>
<feature type="transmembrane region" description="Helical" evidence="1">
    <location>
        <begin position="156"/>
        <end position="175"/>
    </location>
</feature>
<feature type="topological domain" description="Periplasmic" evidence="1">
    <location>
        <begin position="176"/>
        <end position="196"/>
    </location>
</feature>
<feature type="transmembrane region" description="Helical" evidence="1">
    <location>
        <begin position="197"/>
        <end position="220"/>
    </location>
</feature>
<feature type="topological domain" description="Cytoplasmic" evidence="1">
    <location>
        <begin position="221"/>
        <end position="238"/>
    </location>
</feature>
<feature type="transmembrane region" description="Helical" evidence="1">
    <location>
        <begin position="239"/>
        <end position="258"/>
    </location>
</feature>
<feature type="topological domain" description="Periplasmic" evidence="1">
    <location>
        <begin position="259"/>
        <end position="276"/>
    </location>
</feature>
<feature type="transmembrane region" description="Helical" evidence="1">
    <location>
        <begin position="277"/>
        <end position="297"/>
    </location>
</feature>
<feature type="topological domain" description="Cytoplasmic" evidence="1">
    <location>
        <begin position="298"/>
        <end position="327"/>
    </location>
</feature>
<feature type="transmembrane region" description="Helical" evidence="1">
    <location>
        <begin position="328"/>
        <end position="344"/>
    </location>
</feature>
<feature type="topological domain" description="Periplasmic" evidence="1">
    <location>
        <begin position="345"/>
        <end position="350"/>
    </location>
</feature>
<feature type="transmembrane region" description="Helical" evidence="1">
    <location>
        <begin position="351"/>
        <end position="370"/>
    </location>
</feature>
<feature type="topological domain" description="Cytoplasmic" evidence="1">
    <location>
        <begin position="371"/>
        <end position="387"/>
    </location>
</feature>
<feature type="transmembrane region" description="Helical" evidence="1">
    <location>
        <begin position="388"/>
        <end position="406"/>
    </location>
</feature>
<feature type="topological domain" description="Periplasmic" evidence="1">
    <location>
        <begin position="407"/>
        <end position="412"/>
    </location>
</feature>
<protein>
    <recommendedName>
        <fullName evidence="1">Divalent metal cation transporter MntH</fullName>
    </recommendedName>
</protein>
<proteinExistence type="inferred from homology"/>
<organism>
    <name type="scientific">Escherichia coli O6:K15:H31 (strain 536 / UPEC)</name>
    <dbReference type="NCBI Taxonomy" id="362663"/>
    <lineage>
        <taxon>Bacteria</taxon>
        <taxon>Pseudomonadati</taxon>
        <taxon>Pseudomonadota</taxon>
        <taxon>Gammaproteobacteria</taxon>
        <taxon>Enterobacterales</taxon>
        <taxon>Enterobacteriaceae</taxon>
        <taxon>Escherichia</taxon>
    </lineage>
</organism>
<comment type="function">
    <text evidence="1">H(+)-stimulated, divalent metal cation uptake system.</text>
</comment>
<comment type="subcellular location">
    <subcellularLocation>
        <location evidence="1">Cell inner membrane</location>
        <topology evidence="1">Multi-pass membrane protein</topology>
    </subcellularLocation>
</comment>
<comment type="similarity">
    <text evidence="1">Belongs to the NRAMP family.</text>
</comment>